<keyword id="KW-0143">Chaperone</keyword>
<keyword id="KW-0963">Cytoplasm</keyword>
<gene>
    <name evidence="1" type="primary">groES</name>
    <name evidence="1" type="synonym">groS</name>
    <name type="ordered locus">MADE_1019630</name>
</gene>
<name>CH10_ALTMD</name>
<evidence type="ECO:0000255" key="1">
    <source>
        <dbReference type="HAMAP-Rule" id="MF_00580"/>
    </source>
</evidence>
<dbReference type="EMBL" id="CP001103">
    <property type="protein sequence ID" value="AEB00049.1"/>
    <property type="molecule type" value="Genomic_DNA"/>
</dbReference>
<dbReference type="RefSeq" id="WP_012520088.1">
    <property type="nucleotide sequence ID" value="NC_011138.3"/>
</dbReference>
<dbReference type="SMR" id="B4S113"/>
<dbReference type="KEGG" id="amc:MADE_1019630"/>
<dbReference type="HOGENOM" id="CLU_132825_1_1_6"/>
<dbReference type="Proteomes" id="UP000001870">
    <property type="component" value="Chromosome"/>
</dbReference>
<dbReference type="GO" id="GO:0005737">
    <property type="term" value="C:cytoplasm"/>
    <property type="evidence" value="ECO:0007669"/>
    <property type="project" value="UniProtKB-SubCell"/>
</dbReference>
<dbReference type="GO" id="GO:0005524">
    <property type="term" value="F:ATP binding"/>
    <property type="evidence" value="ECO:0007669"/>
    <property type="project" value="InterPro"/>
</dbReference>
<dbReference type="GO" id="GO:0046872">
    <property type="term" value="F:metal ion binding"/>
    <property type="evidence" value="ECO:0007669"/>
    <property type="project" value="TreeGrafter"/>
</dbReference>
<dbReference type="GO" id="GO:0044183">
    <property type="term" value="F:protein folding chaperone"/>
    <property type="evidence" value="ECO:0007669"/>
    <property type="project" value="InterPro"/>
</dbReference>
<dbReference type="GO" id="GO:0051087">
    <property type="term" value="F:protein-folding chaperone binding"/>
    <property type="evidence" value="ECO:0007669"/>
    <property type="project" value="TreeGrafter"/>
</dbReference>
<dbReference type="GO" id="GO:0051082">
    <property type="term" value="F:unfolded protein binding"/>
    <property type="evidence" value="ECO:0007669"/>
    <property type="project" value="TreeGrafter"/>
</dbReference>
<dbReference type="GO" id="GO:0051085">
    <property type="term" value="P:chaperone cofactor-dependent protein refolding"/>
    <property type="evidence" value="ECO:0007669"/>
    <property type="project" value="TreeGrafter"/>
</dbReference>
<dbReference type="CDD" id="cd00320">
    <property type="entry name" value="cpn10"/>
    <property type="match status" value="1"/>
</dbReference>
<dbReference type="FunFam" id="2.30.33.40:FF:000001">
    <property type="entry name" value="10 kDa chaperonin"/>
    <property type="match status" value="1"/>
</dbReference>
<dbReference type="Gene3D" id="2.30.33.40">
    <property type="entry name" value="GroES chaperonin"/>
    <property type="match status" value="1"/>
</dbReference>
<dbReference type="HAMAP" id="MF_00580">
    <property type="entry name" value="CH10"/>
    <property type="match status" value="1"/>
</dbReference>
<dbReference type="InterPro" id="IPR020818">
    <property type="entry name" value="Chaperonin_GroES"/>
</dbReference>
<dbReference type="InterPro" id="IPR037124">
    <property type="entry name" value="Chaperonin_GroES_sf"/>
</dbReference>
<dbReference type="InterPro" id="IPR018369">
    <property type="entry name" value="Chaprnonin_Cpn10_CS"/>
</dbReference>
<dbReference type="InterPro" id="IPR011032">
    <property type="entry name" value="GroES-like_sf"/>
</dbReference>
<dbReference type="NCBIfam" id="NF001526">
    <property type="entry name" value="PRK00364.1-1"/>
    <property type="match status" value="1"/>
</dbReference>
<dbReference type="NCBIfam" id="NF001527">
    <property type="entry name" value="PRK00364.1-2"/>
    <property type="match status" value="1"/>
</dbReference>
<dbReference type="NCBIfam" id="NF001531">
    <property type="entry name" value="PRK00364.2-2"/>
    <property type="match status" value="1"/>
</dbReference>
<dbReference type="PANTHER" id="PTHR10772">
    <property type="entry name" value="10 KDA HEAT SHOCK PROTEIN"/>
    <property type="match status" value="1"/>
</dbReference>
<dbReference type="PANTHER" id="PTHR10772:SF58">
    <property type="entry name" value="CO-CHAPERONIN GROES"/>
    <property type="match status" value="1"/>
</dbReference>
<dbReference type="Pfam" id="PF00166">
    <property type="entry name" value="Cpn10"/>
    <property type="match status" value="1"/>
</dbReference>
<dbReference type="PRINTS" id="PR00297">
    <property type="entry name" value="CHAPERONIN10"/>
</dbReference>
<dbReference type="SMART" id="SM00883">
    <property type="entry name" value="Cpn10"/>
    <property type="match status" value="1"/>
</dbReference>
<dbReference type="SUPFAM" id="SSF50129">
    <property type="entry name" value="GroES-like"/>
    <property type="match status" value="1"/>
</dbReference>
<dbReference type="PROSITE" id="PS00681">
    <property type="entry name" value="CHAPERONINS_CPN10"/>
    <property type="match status" value="1"/>
</dbReference>
<protein>
    <recommendedName>
        <fullName evidence="1">Co-chaperonin GroES</fullName>
    </recommendedName>
    <alternativeName>
        <fullName evidence="1">10 kDa chaperonin</fullName>
    </alternativeName>
    <alternativeName>
        <fullName evidence="1">Chaperonin-10</fullName>
        <shortName evidence="1">Cpn10</shortName>
    </alternativeName>
</protein>
<reference key="1">
    <citation type="journal article" date="2008" name="ISME J.">
        <title>Comparative genomics of two ecotypes of the marine planktonic copiotroph Alteromonas macleodii suggests alternative lifestyles associated with different kinds of particulate organic matter.</title>
        <authorList>
            <person name="Ivars-Martinez E."/>
            <person name="Martin-Cuadrado A.-B."/>
            <person name="D'Auria G."/>
            <person name="Mira A."/>
            <person name="Ferriera S."/>
            <person name="Johnson J."/>
            <person name="Friedman R."/>
            <person name="Rodriguez-Valera F."/>
        </authorList>
    </citation>
    <scope>NUCLEOTIDE SEQUENCE [LARGE SCALE GENOMIC DNA]</scope>
    <source>
        <strain>DSM 17117 / CIP 110805 / LMG 28347 / Deep ecotype</strain>
    </source>
</reference>
<proteinExistence type="inferred from homology"/>
<organism>
    <name type="scientific">Alteromonas mediterranea (strain DSM 17117 / CIP 110805 / LMG 28347 / Deep ecotype)</name>
    <dbReference type="NCBI Taxonomy" id="1774373"/>
    <lineage>
        <taxon>Bacteria</taxon>
        <taxon>Pseudomonadati</taxon>
        <taxon>Pseudomonadota</taxon>
        <taxon>Gammaproteobacteria</taxon>
        <taxon>Alteromonadales</taxon>
        <taxon>Alteromonadaceae</taxon>
        <taxon>Alteromonas/Salinimonas group</taxon>
        <taxon>Alteromonas</taxon>
    </lineage>
</organism>
<sequence>MAIRPLHDRVILKRAEQESKSAGGIVLTGSAAEKSTRGEVIAVGNGRILENGEVKALDVKVGDTVIFNDGYGVKTEKLDGEEVLILSESDILAIVE</sequence>
<comment type="function">
    <text evidence="1">Together with the chaperonin GroEL, plays an essential role in assisting protein folding. The GroEL-GroES system forms a nano-cage that allows encapsulation of the non-native substrate proteins and provides a physical environment optimized to promote and accelerate protein folding. GroES binds to the apical surface of the GroEL ring, thereby capping the opening of the GroEL channel.</text>
</comment>
<comment type="subunit">
    <text evidence="1">Heptamer of 7 subunits arranged in a ring. Interacts with the chaperonin GroEL.</text>
</comment>
<comment type="subcellular location">
    <subcellularLocation>
        <location evidence="1">Cytoplasm</location>
    </subcellularLocation>
</comment>
<comment type="similarity">
    <text evidence="1">Belongs to the GroES chaperonin family.</text>
</comment>
<feature type="chain" id="PRO_1000129620" description="Co-chaperonin GroES">
    <location>
        <begin position="1"/>
        <end position="96"/>
    </location>
</feature>
<accession>B4S113</accession>
<accession>F2GAT4</accession>